<keyword id="KW-0998">Cell outer membrane</keyword>
<keyword id="KW-0406">Ion transport</keyword>
<keyword id="KW-0472">Membrane</keyword>
<keyword id="KW-0626">Porin</keyword>
<keyword id="KW-0732">Signal</keyword>
<keyword id="KW-0798">TonB box</keyword>
<keyword id="KW-0812">Transmembrane</keyword>
<keyword id="KW-1134">Transmembrane beta strand</keyword>
<keyword id="KW-0813">Transport</keyword>
<dbReference type="EMBL" id="CP000789">
    <property type="protein sequence ID" value="ABU69289.1"/>
    <property type="molecule type" value="Genomic_DNA"/>
</dbReference>
<dbReference type="RefSeq" id="WP_012126562.1">
    <property type="nucleotide sequence ID" value="NC_009783.1"/>
</dbReference>
<dbReference type="SMR" id="A7MXY8"/>
<dbReference type="KEGG" id="vha:VIBHAR_00261"/>
<dbReference type="PATRIC" id="fig|338187.25.peg.2308"/>
<dbReference type="Proteomes" id="UP000008152">
    <property type="component" value="Chromosome I"/>
</dbReference>
<dbReference type="GO" id="GO:0009279">
    <property type="term" value="C:cell outer membrane"/>
    <property type="evidence" value="ECO:0007669"/>
    <property type="project" value="UniProtKB-SubCell"/>
</dbReference>
<dbReference type="GO" id="GO:0046930">
    <property type="term" value="C:pore complex"/>
    <property type="evidence" value="ECO:0007669"/>
    <property type="project" value="UniProtKB-KW"/>
</dbReference>
<dbReference type="GO" id="GO:0015420">
    <property type="term" value="F:ABC-type vitamin B12 transporter activity"/>
    <property type="evidence" value="ECO:0007669"/>
    <property type="project" value="InterPro"/>
</dbReference>
<dbReference type="GO" id="GO:0015288">
    <property type="term" value="F:porin activity"/>
    <property type="evidence" value="ECO:0007669"/>
    <property type="project" value="UniProtKB-KW"/>
</dbReference>
<dbReference type="GO" id="GO:0006811">
    <property type="term" value="P:monoatomic ion transport"/>
    <property type="evidence" value="ECO:0007669"/>
    <property type="project" value="UniProtKB-KW"/>
</dbReference>
<dbReference type="CDD" id="cd01347">
    <property type="entry name" value="ligand_gated_channel"/>
    <property type="match status" value="1"/>
</dbReference>
<dbReference type="Gene3D" id="2.40.170.20">
    <property type="entry name" value="TonB-dependent receptor, beta-barrel domain"/>
    <property type="match status" value="1"/>
</dbReference>
<dbReference type="Gene3D" id="2.170.130.10">
    <property type="entry name" value="TonB-dependent receptor, plug domain"/>
    <property type="match status" value="1"/>
</dbReference>
<dbReference type="HAMAP" id="MF_01531">
    <property type="entry name" value="BtuB"/>
    <property type="match status" value="1"/>
</dbReference>
<dbReference type="InterPro" id="IPR010101">
    <property type="entry name" value="B12_transptr_BtuB"/>
</dbReference>
<dbReference type="InterPro" id="IPR012910">
    <property type="entry name" value="Plug_dom"/>
</dbReference>
<dbReference type="InterPro" id="IPR037066">
    <property type="entry name" value="Plug_dom_sf"/>
</dbReference>
<dbReference type="InterPro" id="IPR039426">
    <property type="entry name" value="TonB-dep_rcpt-like"/>
</dbReference>
<dbReference type="InterPro" id="IPR000531">
    <property type="entry name" value="TonB-dep_rcpt_b-brl"/>
</dbReference>
<dbReference type="InterPro" id="IPR010916">
    <property type="entry name" value="TonB_box_CS"/>
</dbReference>
<dbReference type="InterPro" id="IPR036942">
    <property type="entry name" value="TonB_rcpt_b-brl_sf"/>
</dbReference>
<dbReference type="PANTHER" id="PTHR30069:SF53">
    <property type="entry name" value="COLICIN I RECEPTOR-RELATED"/>
    <property type="match status" value="1"/>
</dbReference>
<dbReference type="PANTHER" id="PTHR30069">
    <property type="entry name" value="TONB-DEPENDENT OUTER MEMBRANE RECEPTOR"/>
    <property type="match status" value="1"/>
</dbReference>
<dbReference type="Pfam" id="PF07715">
    <property type="entry name" value="Plug"/>
    <property type="match status" value="1"/>
</dbReference>
<dbReference type="Pfam" id="PF00593">
    <property type="entry name" value="TonB_dep_Rec_b-barrel"/>
    <property type="match status" value="1"/>
</dbReference>
<dbReference type="SUPFAM" id="SSF56935">
    <property type="entry name" value="Porins"/>
    <property type="match status" value="1"/>
</dbReference>
<dbReference type="PROSITE" id="PS00430">
    <property type="entry name" value="TONB_DEPENDENT_REC_1"/>
    <property type="match status" value="1"/>
</dbReference>
<dbReference type="PROSITE" id="PS52016">
    <property type="entry name" value="TONB_DEPENDENT_REC_3"/>
    <property type="match status" value="1"/>
</dbReference>
<accession>A7MXY8</accession>
<reference key="1">
    <citation type="submission" date="2007-08" db="EMBL/GenBank/DDBJ databases">
        <authorList>
            <consortium name="The Vibrio harveyi Genome Sequencing Project"/>
            <person name="Bassler B."/>
            <person name="Clifton S.W."/>
            <person name="Fulton L."/>
            <person name="Delehaunty K."/>
            <person name="Fronick C."/>
            <person name="Harrison M."/>
            <person name="Markivic C."/>
            <person name="Fulton R."/>
            <person name="Tin-Wollam A.-M."/>
            <person name="Shah N."/>
            <person name="Pepin K."/>
            <person name="Nash W."/>
            <person name="Thiruvilangam P."/>
            <person name="Bhonagiri V."/>
            <person name="Waters C."/>
            <person name="Tu K.C."/>
            <person name="Irgon J."/>
            <person name="Wilson R.K."/>
        </authorList>
    </citation>
    <scope>NUCLEOTIDE SEQUENCE [LARGE SCALE GENOMIC DNA]</scope>
    <source>
        <strain>ATCC BAA-1116 / BB120</strain>
    </source>
</reference>
<protein>
    <recommendedName>
        <fullName evidence="1">Vitamin B12 transporter BtuB</fullName>
    </recommendedName>
    <alternativeName>
        <fullName evidence="1">Cobalamin receptor</fullName>
    </alternativeName>
    <alternativeName>
        <fullName evidence="1">Outer membrane cobalamin translocator</fullName>
    </alternativeName>
</protein>
<comment type="function">
    <text evidence="1">Involved in the active translocation of vitamin B12 (cyanocobalamin) across the outer membrane to the periplasmic space. It derives its energy for transport by interacting with the trans-periplasmic membrane protein TonB.</text>
</comment>
<comment type="subcellular location">
    <subcellularLocation>
        <location evidence="1">Cell outer membrane</location>
        <topology evidence="1">Multi-pass membrane protein</topology>
    </subcellularLocation>
</comment>
<comment type="similarity">
    <text evidence="1">Belongs to the TonB-dependent receptor family. BtuB (TC 1.B.14.3.1) subfamily.</text>
</comment>
<gene>
    <name evidence="1" type="primary">btuB</name>
    <name type="ordered locus">VIBHAR_00261</name>
</gene>
<sequence>MRKTFLAITCASLLSPTFYSQAQEVSADETVVVTANRFKQIDGAVLAQTVTVTKEDIKRLQANSLFDVFRTLPSVEVAQYGGRGQSASIYVRGGSSSQVLVLVDGVRMPRAIMGGIDFNQFPINSVERIDYIRGARASIYGSEAISGVINIITRAPINDDSGRVSAGYGSNNHKKGTFVVSKPVGEGKHFKGVLGYEKTDGFNVKPQPGLNDGDEHGFETLNLKLGYQQNFSDNLSGYVGVSAYNNEYDYDNSSIWSGHEKKTGEVEYVGTDLSLEYNKDVYSSELKLAYGQQDNYDHKSGQNKSTGDHVAIEQFNAIWLNSYSVNEELSIGGGLDYRTEKLAKGYIAPSDRGPAKDYDPEKNPRTNFGVSAIAQYAYDVWTLEASVRNDDNNQFGNNTTWQTAAGWSFYEGYELTLSHGTAFRAPSFVDLYYPGYEMPNLKPEESENTELSLSGAVSIVDWTVTGYYNEIENMLIWEGAGMQNVGEAEIKGVELEVKLDTDIVSHEFYLDYKDPVDKSGAEDTQLAYRSKRGAKWNAYATFDQWTLGSQYLYQGERFNGSTRLPSYSLWNFTASYAVNQNWDINAKLSNAFDKDYEMYVGYVTPGRQYFVSADYRF</sequence>
<proteinExistence type="inferred from homology"/>
<feature type="signal peptide" evidence="1">
    <location>
        <begin position="1"/>
        <end position="22"/>
    </location>
</feature>
<feature type="chain" id="PRO_1000068688" description="Vitamin B12 transporter BtuB">
    <location>
        <begin position="23"/>
        <end position="617"/>
    </location>
</feature>
<feature type="domain" description="TBDR plug" evidence="2">
    <location>
        <begin position="40"/>
        <end position="154"/>
    </location>
</feature>
<feature type="domain" description="TBDR beta-barrel" evidence="2">
    <location>
        <begin position="159"/>
        <end position="617"/>
    </location>
</feature>
<feature type="short sequence motif" description="TonB box">
    <location>
        <begin position="29"/>
        <end position="36"/>
    </location>
</feature>
<feature type="short sequence motif" description="TonB C-terminal box">
    <location>
        <begin position="600"/>
        <end position="617"/>
    </location>
</feature>
<evidence type="ECO:0000255" key="1">
    <source>
        <dbReference type="HAMAP-Rule" id="MF_01531"/>
    </source>
</evidence>
<evidence type="ECO:0000255" key="2">
    <source>
        <dbReference type="PROSITE-ProRule" id="PRU01360"/>
    </source>
</evidence>
<name>BTUB_VIBC1</name>
<organism>
    <name type="scientific">Vibrio campbellii (strain ATCC BAA-1116)</name>
    <dbReference type="NCBI Taxonomy" id="2902295"/>
    <lineage>
        <taxon>Bacteria</taxon>
        <taxon>Pseudomonadati</taxon>
        <taxon>Pseudomonadota</taxon>
        <taxon>Gammaproteobacteria</taxon>
        <taxon>Vibrionales</taxon>
        <taxon>Vibrionaceae</taxon>
        <taxon>Vibrio</taxon>
    </lineage>
</organism>